<evidence type="ECO:0000255" key="1"/>
<evidence type="ECO:0000255" key="2">
    <source>
        <dbReference type="PROSITE-ProRule" id="PRU00498"/>
    </source>
</evidence>
<evidence type="ECO:0000256" key="3">
    <source>
        <dbReference type="SAM" id="MobiDB-lite"/>
    </source>
</evidence>
<evidence type="ECO:0000269" key="4">
    <source>
    </source>
</evidence>
<evidence type="ECO:0000303" key="5">
    <source>
    </source>
</evidence>
<evidence type="ECO:0000305" key="6"/>
<evidence type="ECO:0000305" key="7">
    <source>
    </source>
</evidence>
<name>CARO_GIBF5</name>
<feature type="chain" id="PRO_0000456847" description="Opsin-like protein carO">
    <location>
        <begin position="1"/>
        <end position="307"/>
    </location>
</feature>
<feature type="transmembrane region" description="Helical" evidence="1">
    <location>
        <begin position="36"/>
        <end position="56"/>
    </location>
</feature>
<feature type="transmembrane region" description="Helical" evidence="1">
    <location>
        <begin position="64"/>
        <end position="84"/>
    </location>
</feature>
<feature type="transmembrane region" description="Helical" evidence="1">
    <location>
        <begin position="118"/>
        <end position="138"/>
    </location>
</feature>
<feature type="transmembrane region" description="Helical" evidence="1">
    <location>
        <begin position="140"/>
        <end position="160"/>
    </location>
</feature>
<feature type="transmembrane region" description="Helical" evidence="1">
    <location>
        <begin position="166"/>
        <end position="186"/>
    </location>
</feature>
<feature type="transmembrane region" description="Helical" evidence="1">
    <location>
        <begin position="202"/>
        <end position="222"/>
    </location>
</feature>
<feature type="transmembrane region" description="Helical" evidence="1">
    <location>
        <begin position="235"/>
        <end position="255"/>
    </location>
</feature>
<feature type="region of interest" description="Disordered" evidence="3">
    <location>
        <begin position="280"/>
        <end position="307"/>
    </location>
</feature>
<feature type="compositionally biased region" description="Polar residues" evidence="3">
    <location>
        <begin position="294"/>
        <end position="307"/>
    </location>
</feature>
<feature type="glycosylation site" description="N-linked (GlcNAc...) asparagine" evidence="2">
    <location>
        <position position="28"/>
    </location>
</feature>
<feature type="glycosylation site" description="N-linked (GlcNAc...) asparagine" evidence="2">
    <location>
        <position position="293"/>
    </location>
</feature>
<accession>S0ELR6</accession>
<protein>
    <recommendedName>
        <fullName evidence="5">Opsin-like protein carO</fullName>
    </recommendedName>
    <alternativeName>
        <fullName evidence="5">Carotenoid biosynthesis cluster protein O</fullName>
    </alternativeName>
</protein>
<gene>
    <name evidence="5" type="primary">carO</name>
    <name type="ORF">FFUJ_11804</name>
</gene>
<organism>
    <name type="scientific">Gibberella fujikuroi (strain CBS 195.34 / IMI 58289 / NRRL A-6831)</name>
    <name type="common">Bakanae and foot rot disease fungus</name>
    <name type="synonym">Fusarium fujikuroi</name>
    <dbReference type="NCBI Taxonomy" id="1279085"/>
    <lineage>
        <taxon>Eukaryota</taxon>
        <taxon>Fungi</taxon>
        <taxon>Dikarya</taxon>
        <taxon>Ascomycota</taxon>
        <taxon>Pezizomycotina</taxon>
        <taxon>Sordariomycetes</taxon>
        <taxon>Hypocreomycetidae</taxon>
        <taxon>Hypocreales</taxon>
        <taxon>Nectriaceae</taxon>
        <taxon>Fusarium</taxon>
        <taxon>Fusarium fujikuroi species complex</taxon>
    </lineage>
</organism>
<sequence length="307" mass="34002">MADHLYARKNDALNVNPDIVNGQRSDINITVRGSDWYWAVCAVMTVSTFAFLGLGMRKPRTDRIFHYITAGITMIASIAYFTMASNLGWTPIAVEFQRSNHRVAGIYREIFYARYIDWFLTTPLLLTDLLLTAGMPWPTVLWVILVDWVMIVTGLVGALVKSSYKWGYFAFGCAALAYIVYVLAWEARLHAKHVGPDVGRTFVMCGSLTAVVWILYPIAWGVCEGGNLIAPDSEAVFYGILDLIAKPVFGALLLWGHRNIDPARLGLRIRDIDERIFPDGPNNKVASGHGARNDTATASGSNVNPNA</sequence>
<comment type="function">
    <text evidence="4 7">Opsin-like protein; part of the car gene cluster that mediates the biosynthesis of neurosporaxanthin, a carboxylic apocarotenoid acting as an essential protective pigments and leading to orange pigmentation (PubMed:15133714). The exact role of carO in carotenoid biosynthesis is not known yet, but it could be involved in the regulation of the pathway by light or other stimuli (Probable).</text>
</comment>
<comment type="subcellular location">
    <subcellularLocation>
        <location evidence="1">Membrane</location>
        <topology evidence="1">Multi-pass membrane protein</topology>
    </subcellularLocation>
</comment>
<comment type="induction">
    <text evidence="4">The expression is subject to photoinduction (PubMed:15133714). Expression is slightly induced after 2 hours of incubation at 42 degrees Celsius (PubMed:15133714).</text>
</comment>
<comment type="disruption phenotype">
    <text evidence="4">Does not lead to any apparent phenotypic modification, including no change in the photoinduction of carotenoid biosynthesis.</text>
</comment>
<comment type="similarity">
    <text evidence="6">Belongs to the archaeal/bacterial/fungal opsin family.</text>
</comment>
<dbReference type="EMBL" id="AJ566362">
    <property type="protein sequence ID" value="CAD97459.1"/>
    <property type="molecule type" value="Genomic_DNA"/>
</dbReference>
<dbReference type="EMBL" id="HF679033">
    <property type="protein sequence ID" value="CCT75766.1"/>
    <property type="molecule type" value="Genomic_DNA"/>
</dbReference>
<dbReference type="SMR" id="S0ELR6"/>
<dbReference type="VEuPathDB" id="FungiDB:FFUJ_11804"/>
<dbReference type="Proteomes" id="UP000016800">
    <property type="component" value="Chromosome 11"/>
</dbReference>
<dbReference type="GO" id="GO:0005783">
    <property type="term" value="C:endoplasmic reticulum"/>
    <property type="evidence" value="ECO:0007669"/>
    <property type="project" value="TreeGrafter"/>
</dbReference>
<dbReference type="GO" id="GO:0005886">
    <property type="term" value="C:plasma membrane"/>
    <property type="evidence" value="ECO:0007669"/>
    <property type="project" value="TreeGrafter"/>
</dbReference>
<dbReference type="GO" id="GO:0005216">
    <property type="term" value="F:monoatomic ion channel activity"/>
    <property type="evidence" value="ECO:0007669"/>
    <property type="project" value="InterPro"/>
</dbReference>
<dbReference type="GO" id="GO:0009881">
    <property type="term" value="F:photoreceptor activity"/>
    <property type="evidence" value="ECO:0007669"/>
    <property type="project" value="UniProtKB-KW"/>
</dbReference>
<dbReference type="GO" id="GO:0007602">
    <property type="term" value="P:phototransduction"/>
    <property type="evidence" value="ECO:0007669"/>
    <property type="project" value="UniProtKB-KW"/>
</dbReference>
<dbReference type="CDD" id="cd15239">
    <property type="entry name" value="7tm_YRO2_fungal-like"/>
    <property type="match status" value="1"/>
</dbReference>
<dbReference type="FunFam" id="1.20.1070.10:FF:000160">
    <property type="entry name" value="Related to Opsin-1"/>
    <property type="match status" value="1"/>
</dbReference>
<dbReference type="Gene3D" id="1.20.1070.10">
    <property type="entry name" value="Rhodopsin 7-helix transmembrane proteins"/>
    <property type="match status" value="1"/>
</dbReference>
<dbReference type="InterPro" id="IPR001425">
    <property type="entry name" value="Arc/bac/fun_rhodopsins"/>
</dbReference>
<dbReference type="InterPro" id="IPR018229">
    <property type="entry name" value="Rhodopsin_retinal_BS"/>
</dbReference>
<dbReference type="InterPro" id="IPR043476">
    <property type="entry name" value="Yro2-like_7TM"/>
</dbReference>
<dbReference type="PANTHER" id="PTHR28286">
    <property type="match status" value="1"/>
</dbReference>
<dbReference type="PANTHER" id="PTHR28286:SF1">
    <property type="entry name" value="30 KDA HEAT SHOCK PROTEIN-RELATED"/>
    <property type="match status" value="1"/>
</dbReference>
<dbReference type="Pfam" id="PF01036">
    <property type="entry name" value="Bac_rhodopsin"/>
    <property type="match status" value="1"/>
</dbReference>
<dbReference type="PRINTS" id="PR00251">
    <property type="entry name" value="BACTRLOPSIN"/>
</dbReference>
<dbReference type="SMART" id="SM01021">
    <property type="entry name" value="Bac_rhodopsin"/>
    <property type="match status" value="1"/>
</dbReference>
<dbReference type="SUPFAM" id="SSF81321">
    <property type="entry name" value="Family A G protein-coupled receptor-like"/>
    <property type="match status" value="1"/>
</dbReference>
<dbReference type="PROSITE" id="PS00950">
    <property type="entry name" value="BACTERIAL_OPSIN_1"/>
    <property type="match status" value="1"/>
</dbReference>
<reference key="1">
    <citation type="journal article" date="2004" name="Curr. Genet.">
        <title>A gene of the opsin family in the carotenoid gene cluster of Fusarium fujikuroi.</title>
        <authorList>
            <person name="Prado M.M."/>
            <person name="Prado-Cabrero A."/>
            <person name="Fernandez-Martin R."/>
            <person name="Avalos J."/>
        </authorList>
    </citation>
    <scope>NUCLEOTIDE SEQUENCE [GENOMIC DNA]</scope>
    <scope>FUNCTION</scope>
    <scope>DISRUPTION PHENOTYPE</scope>
    <scope>INDUCTION</scope>
    <source>
        <strain>CBS 195.34 / IMI 58289 / NRRL A-6831</strain>
    </source>
</reference>
<reference key="2">
    <citation type="journal article" date="2013" name="PLoS Pathog.">
        <title>Deciphering the cryptic genome: genome-wide analyses of the rice pathogen Fusarium fujikuroi reveal complex regulation of secondary metabolism and novel metabolites.</title>
        <authorList>
            <person name="Wiemann P."/>
            <person name="Sieber C.M.K."/>
            <person name="von Bargen K.W."/>
            <person name="Studt L."/>
            <person name="Niehaus E.-M."/>
            <person name="Espino J.J."/>
            <person name="Huss K."/>
            <person name="Michielse C.B."/>
            <person name="Albermann S."/>
            <person name="Wagner D."/>
            <person name="Bergner S.V."/>
            <person name="Connolly L.R."/>
            <person name="Fischer A."/>
            <person name="Reuter G."/>
            <person name="Kleigrewe K."/>
            <person name="Bald T."/>
            <person name="Wingfield B.D."/>
            <person name="Ophir R."/>
            <person name="Freeman S."/>
            <person name="Hippler M."/>
            <person name="Smith K.M."/>
            <person name="Brown D.W."/>
            <person name="Proctor R.H."/>
            <person name="Muensterkoetter M."/>
            <person name="Freitag M."/>
            <person name="Humpf H.-U."/>
            <person name="Gueldener U."/>
            <person name="Tudzynski B."/>
        </authorList>
    </citation>
    <scope>NUCLEOTIDE SEQUENCE [LARGE SCALE GENOMIC DNA]</scope>
    <source>
        <strain>CBS 195.34 / IMI 58289 / NRRL A-6831</strain>
    </source>
</reference>
<proteinExistence type="evidence at transcript level"/>
<keyword id="KW-0157">Chromophore</keyword>
<keyword id="KW-0325">Glycoprotein</keyword>
<keyword id="KW-0472">Membrane</keyword>
<keyword id="KW-0600">Photoreceptor protein</keyword>
<keyword id="KW-0675">Receptor</keyword>
<keyword id="KW-1185">Reference proteome</keyword>
<keyword id="KW-0681">Retinal protein</keyword>
<keyword id="KW-0716">Sensory transduction</keyword>
<keyword id="KW-0346">Stress response</keyword>
<keyword id="KW-0812">Transmembrane</keyword>
<keyword id="KW-1133">Transmembrane helix</keyword>